<accession>Q98PR1</accession>
<feature type="chain" id="PRO_0000165561" description="Holliday junction branch migration complex subunit RuvB">
    <location>
        <begin position="1"/>
        <end position="315"/>
    </location>
</feature>
<feature type="region of interest" description="Large ATPase domain (RuvB-L)" evidence="1">
    <location>
        <begin position="1"/>
        <end position="168"/>
    </location>
</feature>
<feature type="region of interest" description="Small ATPAse domain (RuvB-S)" evidence="1">
    <location>
        <begin position="169"/>
        <end position="239"/>
    </location>
</feature>
<feature type="region of interest" description="Head domain (RuvB-H)" evidence="1">
    <location>
        <begin position="242"/>
        <end position="315"/>
    </location>
</feature>
<feature type="binding site" evidence="1">
    <location>
        <position position="7"/>
    </location>
    <ligand>
        <name>ATP</name>
        <dbReference type="ChEBI" id="CHEBI:30616"/>
    </ligand>
</feature>
<feature type="binding site" evidence="1">
    <location>
        <position position="8"/>
    </location>
    <ligand>
        <name>ATP</name>
        <dbReference type="ChEBI" id="CHEBI:30616"/>
    </ligand>
</feature>
<feature type="binding site" evidence="1">
    <location>
        <position position="49"/>
    </location>
    <ligand>
        <name>ATP</name>
        <dbReference type="ChEBI" id="CHEBI:30616"/>
    </ligand>
</feature>
<feature type="binding site" evidence="1">
    <location>
        <position position="52"/>
    </location>
    <ligand>
        <name>ATP</name>
        <dbReference type="ChEBI" id="CHEBI:30616"/>
    </ligand>
</feature>
<feature type="binding site" evidence="1">
    <location>
        <position position="53"/>
    </location>
    <ligand>
        <name>ATP</name>
        <dbReference type="ChEBI" id="CHEBI:30616"/>
    </ligand>
</feature>
<feature type="binding site" evidence="1">
    <location>
        <position position="53"/>
    </location>
    <ligand>
        <name>Mg(2+)</name>
        <dbReference type="ChEBI" id="CHEBI:18420"/>
    </ligand>
</feature>
<feature type="binding site" evidence="1">
    <location>
        <position position="54"/>
    </location>
    <ligand>
        <name>ATP</name>
        <dbReference type="ChEBI" id="CHEBI:30616"/>
    </ligand>
</feature>
<feature type="binding site" evidence="1">
    <location>
        <begin position="115"/>
        <end position="117"/>
    </location>
    <ligand>
        <name>ATP</name>
        <dbReference type="ChEBI" id="CHEBI:30616"/>
    </ligand>
</feature>
<feature type="binding site" evidence="1">
    <location>
        <position position="158"/>
    </location>
    <ligand>
        <name>ATP</name>
        <dbReference type="ChEBI" id="CHEBI:30616"/>
    </ligand>
</feature>
<feature type="binding site" evidence="1">
    <location>
        <position position="168"/>
    </location>
    <ligand>
        <name>ATP</name>
        <dbReference type="ChEBI" id="CHEBI:30616"/>
    </ligand>
</feature>
<feature type="binding site" evidence="1">
    <location>
        <position position="205"/>
    </location>
    <ligand>
        <name>ATP</name>
        <dbReference type="ChEBI" id="CHEBI:30616"/>
    </ligand>
</feature>
<feature type="binding site" evidence="1">
    <location>
        <position position="297"/>
    </location>
    <ligand>
        <name>DNA</name>
        <dbReference type="ChEBI" id="CHEBI:16991"/>
    </ligand>
</feature>
<feature type="binding site" evidence="1">
    <location>
        <position position="302"/>
    </location>
    <ligand>
        <name>DNA</name>
        <dbReference type="ChEBI" id="CHEBI:16991"/>
    </ligand>
</feature>
<dbReference type="EC" id="3.6.4.-" evidence="1"/>
<dbReference type="EMBL" id="AL445565">
    <property type="protein sequence ID" value="CAC13831.1"/>
    <property type="molecule type" value="Genomic_DNA"/>
</dbReference>
<dbReference type="PIR" id="B90594">
    <property type="entry name" value="B90594"/>
</dbReference>
<dbReference type="RefSeq" id="WP_010925459.1">
    <property type="nucleotide sequence ID" value="NC_002771.1"/>
</dbReference>
<dbReference type="SMR" id="Q98PR1"/>
<dbReference type="STRING" id="272635.gene:17577265"/>
<dbReference type="KEGG" id="mpu:MYPU_6580"/>
<dbReference type="eggNOG" id="COG2255">
    <property type="taxonomic scope" value="Bacteria"/>
</dbReference>
<dbReference type="HOGENOM" id="CLU_055599_1_0_14"/>
<dbReference type="BioCyc" id="MPUL272635:G1GT6-666-MONOMER"/>
<dbReference type="Proteomes" id="UP000000528">
    <property type="component" value="Chromosome"/>
</dbReference>
<dbReference type="GO" id="GO:0005737">
    <property type="term" value="C:cytoplasm"/>
    <property type="evidence" value="ECO:0007669"/>
    <property type="project" value="UniProtKB-SubCell"/>
</dbReference>
<dbReference type="GO" id="GO:0048476">
    <property type="term" value="C:Holliday junction resolvase complex"/>
    <property type="evidence" value="ECO:0007669"/>
    <property type="project" value="UniProtKB-UniRule"/>
</dbReference>
<dbReference type="GO" id="GO:0005524">
    <property type="term" value="F:ATP binding"/>
    <property type="evidence" value="ECO:0007669"/>
    <property type="project" value="UniProtKB-UniRule"/>
</dbReference>
<dbReference type="GO" id="GO:0016887">
    <property type="term" value="F:ATP hydrolysis activity"/>
    <property type="evidence" value="ECO:0007669"/>
    <property type="project" value="InterPro"/>
</dbReference>
<dbReference type="GO" id="GO:0000400">
    <property type="term" value="F:four-way junction DNA binding"/>
    <property type="evidence" value="ECO:0007669"/>
    <property type="project" value="UniProtKB-UniRule"/>
</dbReference>
<dbReference type="GO" id="GO:0009378">
    <property type="term" value="F:four-way junction helicase activity"/>
    <property type="evidence" value="ECO:0007669"/>
    <property type="project" value="InterPro"/>
</dbReference>
<dbReference type="GO" id="GO:0006310">
    <property type="term" value="P:DNA recombination"/>
    <property type="evidence" value="ECO:0007669"/>
    <property type="project" value="UniProtKB-UniRule"/>
</dbReference>
<dbReference type="GO" id="GO:0006281">
    <property type="term" value="P:DNA repair"/>
    <property type="evidence" value="ECO:0007669"/>
    <property type="project" value="UniProtKB-UniRule"/>
</dbReference>
<dbReference type="CDD" id="cd00009">
    <property type="entry name" value="AAA"/>
    <property type="match status" value="1"/>
</dbReference>
<dbReference type="Gene3D" id="1.10.8.60">
    <property type="match status" value="1"/>
</dbReference>
<dbReference type="Gene3D" id="3.40.50.300">
    <property type="entry name" value="P-loop containing nucleotide triphosphate hydrolases"/>
    <property type="match status" value="1"/>
</dbReference>
<dbReference type="Gene3D" id="1.10.10.10">
    <property type="entry name" value="Winged helix-like DNA-binding domain superfamily/Winged helix DNA-binding domain"/>
    <property type="match status" value="1"/>
</dbReference>
<dbReference type="HAMAP" id="MF_00016">
    <property type="entry name" value="DNA_HJ_migration_RuvB"/>
    <property type="match status" value="1"/>
</dbReference>
<dbReference type="InterPro" id="IPR003593">
    <property type="entry name" value="AAA+_ATPase"/>
</dbReference>
<dbReference type="InterPro" id="IPR041445">
    <property type="entry name" value="AAA_lid_4"/>
</dbReference>
<dbReference type="InterPro" id="IPR004605">
    <property type="entry name" value="DNA_helicase_Holl-junc_RuvB"/>
</dbReference>
<dbReference type="InterPro" id="IPR027417">
    <property type="entry name" value="P-loop_NTPase"/>
</dbReference>
<dbReference type="InterPro" id="IPR008824">
    <property type="entry name" value="RuvB-like_N"/>
</dbReference>
<dbReference type="InterPro" id="IPR008823">
    <property type="entry name" value="RuvB_C"/>
</dbReference>
<dbReference type="InterPro" id="IPR036388">
    <property type="entry name" value="WH-like_DNA-bd_sf"/>
</dbReference>
<dbReference type="InterPro" id="IPR036390">
    <property type="entry name" value="WH_DNA-bd_sf"/>
</dbReference>
<dbReference type="NCBIfam" id="NF000868">
    <property type="entry name" value="PRK00080.1"/>
    <property type="match status" value="1"/>
</dbReference>
<dbReference type="NCBIfam" id="TIGR00635">
    <property type="entry name" value="ruvB"/>
    <property type="match status" value="1"/>
</dbReference>
<dbReference type="PANTHER" id="PTHR42848">
    <property type="match status" value="1"/>
</dbReference>
<dbReference type="PANTHER" id="PTHR42848:SF1">
    <property type="entry name" value="HOLLIDAY JUNCTION BRANCH MIGRATION COMPLEX SUBUNIT RUVB"/>
    <property type="match status" value="1"/>
</dbReference>
<dbReference type="Pfam" id="PF17864">
    <property type="entry name" value="AAA_lid_4"/>
    <property type="match status" value="1"/>
</dbReference>
<dbReference type="Pfam" id="PF05491">
    <property type="entry name" value="RuvB_C"/>
    <property type="match status" value="1"/>
</dbReference>
<dbReference type="Pfam" id="PF05496">
    <property type="entry name" value="RuvB_N"/>
    <property type="match status" value="1"/>
</dbReference>
<dbReference type="SMART" id="SM00382">
    <property type="entry name" value="AAA"/>
    <property type="match status" value="1"/>
</dbReference>
<dbReference type="SUPFAM" id="SSF52540">
    <property type="entry name" value="P-loop containing nucleoside triphosphate hydrolases"/>
    <property type="match status" value="1"/>
</dbReference>
<dbReference type="SUPFAM" id="SSF46785">
    <property type="entry name" value="Winged helix' DNA-binding domain"/>
    <property type="match status" value="1"/>
</dbReference>
<comment type="function">
    <text evidence="1">The RuvA-RuvB-RuvC complex processes Holliday junction (HJ) DNA during genetic recombination and DNA repair, while the RuvA-RuvB complex plays an important role in the rescue of blocked DNA replication forks via replication fork reversal (RFR). RuvA specifically binds to HJ cruciform DNA, conferring on it an open structure. The RuvB hexamer acts as an ATP-dependent pump, pulling dsDNA into and through the RuvAB complex. RuvB forms 2 homohexamers on either side of HJ DNA bound by 1 or 2 RuvA tetramers; 4 subunits per hexamer contact DNA at a time. Coordinated motions by a converter formed by DNA-disengaged RuvB subunits stimulates ATP hydrolysis and nucleotide exchange. Immobilization of the converter enables RuvB to convert the ATP-contained energy into a lever motion, pulling 2 nucleotides of DNA out of the RuvA tetramer per ATP hydrolyzed, thus driving DNA branch migration. The RuvB motors rotate together with the DNA substrate, which together with the progressing nucleotide cycle form the mechanistic basis for DNA recombination by continuous HJ branch migration. Branch migration allows RuvC to scan DNA until it finds its consensus sequence, where it cleaves and resolves cruciform DNA.</text>
</comment>
<comment type="catalytic activity">
    <reaction evidence="1">
        <text>ATP + H2O = ADP + phosphate + H(+)</text>
        <dbReference type="Rhea" id="RHEA:13065"/>
        <dbReference type="ChEBI" id="CHEBI:15377"/>
        <dbReference type="ChEBI" id="CHEBI:15378"/>
        <dbReference type="ChEBI" id="CHEBI:30616"/>
        <dbReference type="ChEBI" id="CHEBI:43474"/>
        <dbReference type="ChEBI" id="CHEBI:456216"/>
    </reaction>
</comment>
<comment type="subunit">
    <text evidence="1">Homohexamer. Forms an RuvA(8)-RuvB(12)-Holliday junction (HJ) complex. HJ DNA is sandwiched between 2 RuvA tetramers; dsDNA enters through RuvA and exits via RuvB. An RuvB hexamer assembles on each DNA strand where it exits the tetramer. Each RuvB hexamer is contacted by two RuvA subunits (via domain III) on 2 adjacent RuvB subunits; this complex drives branch migration. In the full resolvosome a probable DNA-RuvA(4)-RuvB(12)-RuvC(2) complex forms which resolves the HJ.</text>
</comment>
<comment type="subcellular location">
    <subcellularLocation>
        <location evidence="1">Cytoplasm</location>
    </subcellularLocation>
</comment>
<comment type="domain">
    <text evidence="1">Has 3 domains, the large (RuvB-L) and small ATPase (RuvB-S) domains and the C-terminal head (RuvB-H) domain. The head domain binds DNA, while the ATPase domains jointly bind ATP, ADP or are empty depending on the state of the subunit in the translocation cycle. During a single DNA translocation step the structure of each domain remains the same, but their relative positions change.</text>
</comment>
<comment type="similarity">
    <text evidence="1">Belongs to the RuvB family.</text>
</comment>
<gene>
    <name evidence="1" type="primary">ruvB</name>
    <name type="ordered locus">MYPU_6580</name>
</gene>
<evidence type="ECO:0000255" key="1">
    <source>
        <dbReference type="HAMAP-Rule" id="MF_00016"/>
    </source>
</evidence>
<name>RUVB_MYCPU</name>
<protein>
    <recommendedName>
        <fullName evidence="1">Holliday junction branch migration complex subunit RuvB</fullName>
        <ecNumber evidence="1">3.6.4.-</ecNumber>
    </recommendedName>
</protein>
<proteinExistence type="inferred from homology"/>
<keyword id="KW-0067">ATP-binding</keyword>
<keyword id="KW-0963">Cytoplasm</keyword>
<keyword id="KW-0227">DNA damage</keyword>
<keyword id="KW-0233">DNA recombination</keyword>
<keyword id="KW-0234">DNA repair</keyword>
<keyword id="KW-0238">DNA-binding</keyword>
<keyword id="KW-0378">Hydrolase</keyword>
<keyword id="KW-0547">Nucleotide-binding</keyword>
<keyword id="KW-1185">Reference proteome</keyword>
<reference key="1">
    <citation type="journal article" date="2001" name="Nucleic Acids Res.">
        <title>The complete genome sequence of the murine respiratory pathogen Mycoplasma pulmonis.</title>
        <authorList>
            <person name="Chambaud I."/>
            <person name="Heilig R."/>
            <person name="Ferris S."/>
            <person name="Barbe V."/>
            <person name="Samson D."/>
            <person name="Galisson F."/>
            <person name="Moszer I."/>
            <person name="Dybvig K."/>
            <person name="Wroblewski H."/>
            <person name="Viari A."/>
            <person name="Rocha E.P.C."/>
            <person name="Blanchard A."/>
        </authorList>
    </citation>
    <scope>NUCLEOTIDE SEQUENCE [LARGE SCALE GENOMIC DNA]</scope>
    <source>
        <strain>UAB CTIP</strain>
    </source>
</reference>
<sequence>MAKKQEIRPKNFSDFVGQNKLKKLLKVMISSAQVQNRPLDHILFYGNPGTGKTSLASIISNSLNSRIKYAQGNLLDKKTDILTLFASVEENDIIFVDEIHAINKNIEELLYSILEDFVVDIVIGVESNSKIMRLNLKPFTFIGATTQINRISKPLRDRFGLIGQISNYQVEDIEKIIKNNSKKLNIQIDEKATNLIALYSQNIPRLAINLLKRTKDFCIYEECQIIDYKLVNKTLKQLGIYENGLNESQVKYLRSLSETFYKKAVSLDLIVGFLSLQKETIISEIEPLLISNNLIVKTPRGRKITQKGISYLERI</sequence>
<organism>
    <name type="scientific">Mycoplasmopsis pulmonis (strain UAB CTIP)</name>
    <name type="common">Mycoplasma pulmonis</name>
    <dbReference type="NCBI Taxonomy" id="272635"/>
    <lineage>
        <taxon>Bacteria</taxon>
        <taxon>Bacillati</taxon>
        <taxon>Mycoplasmatota</taxon>
        <taxon>Mycoplasmoidales</taxon>
        <taxon>Metamycoplasmataceae</taxon>
        <taxon>Mycoplasmopsis</taxon>
    </lineage>
</organism>